<accession>Q7U5H9</accession>
<comment type="subcellular location">
    <subcellularLocation>
        <location evidence="1">Cellular thylakoid membrane</location>
        <topology evidence="1">Single-pass membrane protein</topology>
    </subcellularLocation>
</comment>
<comment type="similarity">
    <text evidence="1">Belongs to the PsaM family.</text>
</comment>
<protein>
    <recommendedName>
        <fullName evidence="1">Photosystem I reaction center subunit XII</fullName>
    </recommendedName>
    <alternativeName>
        <fullName evidence="1">PSI-M</fullName>
    </alternativeName>
</protein>
<evidence type="ECO:0000255" key="1">
    <source>
        <dbReference type="HAMAP-Rule" id="MF_00828"/>
    </source>
</evidence>
<proteinExistence type="inferred from homology"/>
<reference key="1">
    <citation type="journal article" date="2003" name="Nature">
        <title>The genome of a motile marine Synechococcus.</title>
        <authorList>
            <person name="Palenik B."/>
            <person name="Brahamsha B."/>
            <person name="Larimer F.W."/>
            <person name="Land M.L."/>
            <person name="Hauser L."/>
            <person name="Chain P."/>
            <person name="Lamerdin J.E."/>
            <person name="Regala W."/>
            <person name="Allen E.E."/>
            <person name="McCarren J."/>
            <person name="Paulsen I.T."/>
            <person name="Dufresne A."/>
            <person name="Partensky F."/>
            <person name="Webb E.A."/>
            <person name="Waterbury J."/>
        </authorList>
    </citation>
    <scope>NUCLEOTIDE SEQUENCE [LARGE SCALE GENOMIC DNA]</scope>
    <source>
        <strain>WH8102</strain>
    </source>
</reference>
<feature type="chain" id="PRO_5000096299" description="Photosystem I reaction center subunit XII">
    <location>
        <begin position="1"/>
        <end position="34"/>
    </location>
</feature>
<feature type="transmembrane region" description="Helical" evidence="1">
    <location>
        <begin position="10"/>
        <end position="32"/>
    </location>
</feature>
<organism>
    <name type="scientific">Parasynechococcus marenigrum (strain WH8102)</name>
    <dbReference type="NCBI Taxonomy" id="84588"/>
    <lineage>
        <taxon>Bacteria</taxon>
        <taxon>Bacillati</taxon>
        <taxon>Cyanobacteriota</taxon>
        <taxon>Cyanophyceae</taxon>
        <taxon>Synechococcales</taxon>
        <taxon>Prochlorococcaceae</taxon>
        <taxon>Parasynechococcus</taxon>
        <taxon>Parasynechococcus marenigrum</taxon>
    </lineage>
</organism>
<gene>
    <name evidence="1" type="primary">psaM</name>
    <name type="ordered locus">SYNW1728</name>
</gene>
<name>PSAM_PARMW</name>
<keyword id="KW-0472">Membrane</keyword>
<keyword id="KW-0602">Photosynthesis</keyword>
<keyword id="KW-0603">Photosystem I</keyword>
<keyword id="KW-0793">Thylakoid</keyword>
<keyword id="KW-0812">Transmembrane</keyword>
<keyword id="KW-1133">Transmembrane helix</keyword>
<dbReference type="EMBL" id="BX569693">
    <property type="protein sequence ID" value="CAE08243.1"/>
    <property type="molecule type" value="Genomic_DNA"/>
</dbReference>
<dbReference type="RefSeq" id="WP_011128588.1">
    <property type="nucleotide sequence ID" value="NC_005070.1"/>
</dbReference>
<dbReference type="SMR" id="Q7U5H9"/>
<dbReference type="STRING" id="84588.SYNW1728"/>
<dbReference type="KEGG" id="syw:SYNW1728"/>
<dbReference type="HOGENOM" id="CLU_215773_1_0_3"/>
<dbReference type="Proteomes" id="UP000001422">
    <property type="component" value="Chromosome"/>
</dbReference>
<dbReference type="GO" id="GO:0009522">
    <property type="term" value="C:photosystem I"/>
    <property type="evidence" value="ECO:0007669"/>
    <property type="project" value="UniProtKB-KW"/>
</dbReference>
<dbReference type="GO" id="GO:0031676">
    <property type="term" value="C:plasma membrane-derived thylakoid membrane"/>
    <property type="evidence" value="ECO:0007669"/>
    <property type="project" value="UniProtKB-SubCell"/>
</dbReference>
<dbReference type="GO" id="GO:0015979">
    <property type="term" value="P:photosynthesis"/>
    <property type="evidence" value="ECO:0007669"/>
    <property type="project" value="UniProtKB-UniRule"/>
</dbReference>
<dbReference type="HAMAP" id="MF_00828">
    <property type="entry name" value="PSI_PsaM"/>
    <property type="match status" value="1"/>
</dbReference>
<dbReference type="InterPro" id="IPR010010">
    <property type="entry name" value="PSI_PsaM"/>
</dbReference>
<dbReference type="InterPro" id="IPR037279">
    <property type="entry name" value="PSI_PsaM_sf"/>
</dbReference>
<dbReference type="NCBIfam" id="TIGR03053">
    <property type="entry name" value="PS_I_psaM"/>
    <property type="match status" value="1"/>
</dbReference>
<dbReference type="Pfam" id="PF07465">
    <property type="entry name" value="PsaM"/>
    <property type="match status" value="1"/>
</dbReference>
<dbReference type="SUPFAM" id="SSF81548">
    <property type="entry name" value="Subunit XII of photosystem I reaction centre, PsaM"/>
    <property type="match status" value="1"/>
</dbReference>
<sequence length="34" mass="3473">MATALTSAEVFVALVVAAHAAVLALRLSISLYEA</sequence>